<protein>
    <recommendedName>
        <fullName evidence="1">Adenosylhomocysteinase</fullName>
        <ecNumber evidence="1">3.13.2.1</ecNumber>
    </recommendedName>
    <alternativeName>
        <fullName evidence="1">S-adenosyl-L-homocysteine hydrolase</fullName>
        <shortName evidence="1">AdoHcyase</shortName>
    </alternativeName>
</protein>
<gene>
    <name evidence="1" type="primary">ahcY</name>
    <name type="ordered locus">P9301_18171</name>
</gene>
<dbReference type="EC" id="3.13.2.1" evidence="1"/>
<dbReference type="EMBL" id="CP000576">
    <property type="protein sequence ID" value="ABO18440.1"/>
    <property type="molecule type" value="Genomic_DNA"/>
</dbReference>
<dbReference type="RefSeq" id="WP_011863725.1">
    <property type="nucleotide sequence ID" value="NC_009091.1"/>
</dbReference>
<dbReference type="SMR" id="A3PFB5"/>
<dbReference type="STRING" id="167546.P9301_18171"/>
<dbReference type="KEGG" id="pmg:P9301_18171"/>
<dbReference type="eggNOG" id="COG0499">
    <property type="taxonomic scope" value="Bacteria"/>
</dbReference>
<dbReference type="HOGENOM" id="CLU_025194_2_1_3"/>
<dbReference type="OrthoDB" id="9802717at2"/>
<dbReference type="UniPathway" id="UPA00314">
    <property type="reaction ID" value="UER00076"/>
</dbReference>
<dbReference type="Proteomes" id="UP000001430">
    <property type="component" value="Chromosome"/>
</dbReference>
<dbReference type="GO" id="GO:0005829">
    <property type="term" value="C:cytosol"/>
    <property type="evidence" value="ECO:0007669"/>
    <property type="project" value="TreeGrafter"/>
</dbReference>
<dbReference type="GO" id="GO:0004013">
    <property type="term" value="F:adenosylhomocysteinase activity"/>
    <property type="evidence" value="ECO:0007669"/>
    <property type="project" value="UniProtKB-UniRule"/>
</dbReference>
<dbReference type="GO" id="GO:0071269">
    <property type="term" value="P:L-homocysteine biosynthetic process"/>
    <property type="evidence" value="ECO:0007669"/>
    <property type="project" value="UniProtKB-UniRule"/>
</dbReference>
<dbReference type="GO" id="GO:0006730">
    <property type="term" value="P:one-carbon metabolic process"/>
    <property type="evidence" value="ECO:0007669"/>
    <property type="project" value="UniProtKB-KW"/>
</dbReference>
<dbReference type="GO" id="GO:0033353">
    <property type="term" value="P:S-adenosylmethionine cycle"/>
    <property type="evidence" value="ECO:0007669"/>
    <property type="project" value="TreeGrafter"/>
</dbReference>
<dbReference type="CDD" id="cd00401">
    <property type="entry name" value="SAHH"/>
    <property type="match status" value="1"/>
</dbReference>
<dbReference type="FunFam" id="3.40.50.720:FF:000004">
    <property type="entry name" value="Adenosylhomocysteinase"/>
    <property type="match status" value="1"/>
</dbReference>
<dbReference type="Gene3D" id="3.40.50.1480">
    <property type="entry name" value="Adenosylhomocysteinase-like"/>
    <property type="match status" value="1"/>
</dbReference>
<dbReference type="Gene3D" id="3.40.50.720">
    <property type="entry name" value="NAD(P)-binding Rossmann-like Domain"/>
    <property type="match status" value="1"/>
</dbReference>
<dbReference type="HAMAP" id="MF_00563">
    <property type="entry name" value="AdoHcyase"/>
    <property type="match status" value="1"/>
</dbReference>
<dbReference type="InterPro" id="IPR042172">
    <property type="entry name" value="Adenosylhomocyst_ase-like_sf"/>
</dbReference>
<dbReference type="InterPro" id="IPR000043">
    <property type="entry name" value="Adenosylhomocysteinase-like"/>
</dbReference>
<dbReference type="InterPro" id="IPR015878">
    <property type="entry name" value="Ado_hCys_hydrolase_NAD-bd"/>
</dbReference>
<dbReference type="InterPro" id="IPR036291">
    <property type="entry name" value="NAD(P)-bd_dom_sf"/>
</dbReference>
<dbReference type="InterPro" id="IPR020082">
    <property type="entry name" value="S-Ado-L-homoCys_hydrolase_CS"/>
</dbReference>
<dbReference type="NCBIfam" id="TIGR00936">
    <property type="entry name" value="ahcY"/>
    <property type="match status" value="1"/>
</dbReference>
<dbReference type="NCBIfam" id="NF004005">
    <property type="entry name" value="PRK05476.2-3"/>
    <property type="match status" value="1"/>
</dbReference>
<dbReference type="PANTHER" id="PTHR23420">
    <property type="entry name" value="ADENOSYLHOMOCYSTEINASE"/>
    <property type="match status" value="1"/>
</dbReference>
<dbReference type="PANTHER" id="PTHR23420:SF0">
    <property type="entry name" value="ADENOSYLHOMOCYSTEINASE"/>
    <property type="match status" value="1"/>
</dbReference>
<dbReference type="Pfam" id="PF05221">
    <property type="entry name" value="AdoHcyase"/>
    <property type="match status" value="1"/>
</dbReference>
<dbReference type="Pfam" id="PF00670">
    <property type="entry name" value="AdoHcyase_NAD"/>
    <property type="match status" value="1"/>
</dbReference>
<dbReference type="PIRSF" id="PIRSF001109">
    <property type="entry name" value="Ad_hcy_hydrolase"/>
    <property type="match status" value="1"/>
</dbReference>
<dbReference type="SMART" id="SM00996">
    <property type="entry name" value="AdoHcyase"/>
    <property type="match status" value="1"/>
</dbReference>
<dbReference type="SMART" id="SM00997">
    <property type="entry name" value="AdoHcyase_NAD"/>
    <property type="match status" value="1"/>
</dbReference>
<dbReference type="SUPFAM" id="SSF52283">
    <property type="entry name" value="Formate/glycerate dehydrogenase catalytic domain-like"/>
    <property type="match status" value="1"/>
</dbReference>
<dbReference type="SUPFAM" id="SSF51735">
    <property type="entry name" value="NAD(P)-binding Rossmann-fold domains"/>
    <property type="match status" value="1"/>
</dbReference>
<dbReference type="PROSITE" id="PS00738">
    <property type="entry name" value="ADOHCYASE_1"/>
    <property type="match status" value="1"/>
</dbReference>
<dbReference type="PROSITE" id="PS00739">
    <property type="entry name" value="ADOHCYASE_2"/>
    <property type="match status" value="1"/>
</dbReference>
<proteinExistence type="inferred from homology"/>
<name>SAHH_PROM0</name>
<evidence type="ECO:0000255" key="1">
    <source>
        <dbReference type="HAMAP-Rule" id="MF_00563"/>
    </source>
</evidence>
<organism>
    <name type="scientific">Prochlorococcus marinus (strain MIT 9301)</name>
    <dbReference type="NCBI Taxonomy" id="167546"/>
    <lineage>
        <taxon>Bacteria</taxon>
        <taxon>Bacillati</taxon>
        <taxon>Cyanobacteriota</taxon>
        <taxon>Cyanophyceae</taxon>
        <taxon>Synechococcales</taxon>
        <taxon>Prochlorococcaceae</taxon>
        <taxon>Prochlorococcus</taxon>
    </lineage>
</organism>
<feature type="chain" id="PRO_1000024744" description="Adenosylhomocysteinase">
    <location>
        <begin position="1"/>
        <end position="472"/>
    </location>
</feature>
<feature type="binding site" evidence="1">
    <location>
        <position position="64"/>
    </location>
    <ligand>
        <name>substrate</name>
    </ligand>
</feature>
<feature type="binding site" evidence="1">
    <location>
        <position position="138"/>
    </location>
    <ligand>
        <name>substrate</name>
    </ligand>
</feature>
<feature type="binding site" evidence="1">
    <location>
        <position position="198"/>
    </location>
    <ligand>
        <name>substrate</name>
    </ligand>
</feature>
<feature type="binding site" evidence="1">
    <location>
        <begin position="199"/>
        <end position="201"/>
    </location>
    <ligand>
        <name>NAD(+)</name>
        <dbReference type="ChEBI" id="CHEBI:57540"/>
    </ligand>
</feature>
<feature type="binding site" evidence="1">
    <location>
        <position position="228"/>
    </location>
    <ligand>
        <name>substrate</name>
    </ligand>
</feature>
<feature type="binding site" evidence="1">
    <location>
        <position position="232"/>
    </location>
    <ligand>
        <name>substrate</name>
    </ligand>
</feature>
<feature type="binding site" evidence="1">
    <location>
        <position position="233"/>
    </location>
    <ligand>
        <name>NAD(+)</name>
        <dbReference type="ChEBI" id="CHEBI:57540"/>
    </ligand>
</feature>
<feature type="binding site" evidence="1">
    <location>
        <begin position="262"/>
        <end position="267"/>
    </location>
    <ligand>
        <name>NAD(+)</name>
        <dbReference type="ChEBI" id="CHEBI:57540"/>
    </ligand>
</feature>
<feature type="binding site" evidence="1">
    <location>
        <position position="285"/>
    </location>
    <ligand>
        <name>NAD(+)</name>
        <dbReference type="ChEBI" id="CHEBI:57540"/>
    </ligand>
</feature>
<feature type="binding site" evidence="1">
    <location>
        <position position="320"/>
    </location>
    <ligand>
        <name>NAD(+)</name>
        <dbReference type="ChEBI" id="CHEBI:57540"/>
    </ligand>
</feature>
<feature type="binding site" evidence="1">
    <location>
        <begin position="341"/>
        <end position="343"/>
    </location>
    <ligand>
        <name>NAD(+)</name>
        <dbReference type="ChEBI" id="CHEBI:57540"/>
    </ligand>
</feature>
<feature type="binding site" evidence="1">
    <location>
        <position position="386"/>
    </location>
    <ligand>
        <name>NAD(+)</name>
        <dbReference type="ChEBI" id="CHEBI:57540"/>
    </ligand>
</feature>
<reference key="1">
    <citation type="journal article" date="2007" name="PLoS Genet.">
        <title>Patterns and implications of gene gain and loss in the evolution of Prochlorococcus.</title>
        <authorList>
            <person name="Kettler G.C."/>
            <person name="Martiny A.C."/>
            <person name="Huang K."/>
            <person name="Zucker J."/>
            <person name="Coleman M.L."/>
            <person name="Rodrigue S."/>
            <person name="Chen F."/>
            <person name="Lapidus A."/>
            <person name="Ferriera S."/>
            <person name="Johnson J."/>
            <person name="Steglich C."/>
            <person name="Church G.M."/>
            <person name="Richardson P."/>
            <person name="Chisholm S.W."/>
        </authorList>
    </citation>
    <scope>NUCLEOTIDE SEQUENCE [LARGE SCALE GENOMIC DNA]</scope>
    <source>
        <strain>MIT 9301</strain>
    </source>
</reference>
<accession>A3PFB5</accession>
<comment type="function">
    <text evidence="1">May play a key role in the regulation of the intracellular concentration of adenosylhomocysteine.</text>
</comment>
<comment type="catalytic activity">
    <reaction evidence="1">
        <text>S-adenosyl-L-homocysteine + H2O = L-homocysteine + adenosine</text>
        <dbReference type="Rhea" id="RHEA:21708"/>
        <dbReference type="ChEBI" id="CHEBI:15377"/>
        <dbReference type="ChEBI" id="CHEBI:16335"/>
        <dbReference type="ChEBI" id="CHEBI:57856"/>
        <dbReference type="ChEBI" id="CHEBI:58199"/>
        <dbReference type="EC" id="3.13.2.1"/>
    </reaction>
</comment>
<comment type="cofactor">
    <cofactor evidence="1">
        <name>NAD(+)</name>
        <dbReference type="ChEBI" id="CHEBI:57540"/>
    </cofactor>
    <text evidence="1">Binds 1 NAD(+) per subunit.</text>
</comment>
<comment type="pathway">
    <text evidence="1">Amino-acid biosynthesis; L-homocysteine biosynthesis; L-homocysteine from S-adenosyl-L-homocysteine: step 1/1.</text>
</comment>
<comment type="subcellular location">
    <subcellularLocation>
        <location evidence="1">Cytoplasm</location>
    </subcellularLocation>
</comment>
<comment type="similarity">
    <text evidence="1">Belongs to the adenosylhomocysteinase family.</text>
</comment>
<sequence length="472" mass="51981">MVIANSVKTSTPKFIISDISLSDFGRKEIKIAETEMPGLMALRDKYQSEKPLKGAKIAGSLHMTIQTAVLIETLVDLGAEVKWASCNIFSTQDHAAAAIADQGISVFAKKGETLDEYWQYTHYILDWGSDFPNMILDDGGDATGLLILGSKAEKDLSVLDNPSNEEEIALFNSIKSKLKNDGEFYSRIKSNIIGVTEETTTGVARLYQLQKQNALPFPAINVNDSVTKSKFDNLYGCRESLVDSIKRATDVMIAGKTALVMGFGDVGKGSAQSLRGLGAIVKVAEIDPICALQAAMEGYSVVRLEDVVEDIDIFVTATGNYQVITHENLVKMKDEAIVCNIGHFDNEIDVASLKNYQWENIKPQVDHITLPSGNKIILLAEGRLVNLGCATGHPSFVMSNSFTNQVLAQIELFNKSEQYAKEVYVLPKHLDEMVARLHLDKIGAKLTKLTKEQADYISVSVEGPYKSEFYRY</sequence>
<keyword id="KW-0963">Cytoplasm</keyword>
<keyword id="KW-0378">Hydrolase</keyword>
<keyword id="KW-0520">NAD</keyword>
<keyword id="KW-0554">One-carbon metabolism</keyword>
<keyword id="KW-1185">Reference proteome</keyword>